<feature type="chain" id="PRO_1000077427" description="Glycerol kinase">
    <location>
        <begin position="1"/>
        <end position="502"/>
    </location>
</feature>
<feature type="binding site" evidence="1">
    <location>
        <position position="14"/>
    </location>
    <ligand>
        <name>ADP</name>
        <dbReference type="ChEBI" id="CHEBI:456216"/>
    </ligand>
</feature>
<feature type="binding site" evidence="1">
    <location>
        <position position="14"/>
    </location>
    <ligand>
        <name>ATP</name>
        <dbReference type="ChEBI" id="CHEBI:30616"/>
    </ligand>
</feature>
<feature type="binding site" evidence="1">
    <location>
        <position position="14"/>
    </location>
    <ligand>
        <name>sn-glycerol 3-phosphate</name>
        <dbReference type="ChEBI" id="CHEBI:57597"/>
    </ligand>
</feature>
<feature type="binding site" evidence="1">
    <location>
        <position position="15"/>
    </location>
    <ligand>
        <name>ATP</name>
        <dbReference type="ChEBI" id="CHEBI:30616"/>
    </ligand>
</feature>
<feature type="binding site" evidence="1">
    <location>
        <position position="16"/>
    </location>
    <ligand>
        <name>ATP</name>
        <dbReference type="ChEBI" id="CHEBI:30616"/>
    </ligand>
</feature>
<feature type="binding site" evidence="1">
    <location>
        <position position="18"/>
    </location>
    <ligand>
        <name>ADP</name>
        <dbReference type="ChEBI" id="CHEBI:456216"/>
    </ligand>
</feature>
<feature type="binding site" evidence="1">
    <location>
        <position position="84"/>
    </location>
    <ligand>
        <name>glycerol</name>
        <dbReference type="ChEBI" id="CHEBI:17754"/>
    </ligand>
</feature>
<feature type="binding site" evidence="1">
    <location>
        <position position="84"/>
    </location>
    <ligand>
        <name>sn-glycerol 3-phosphate</name>
        <dbReference type="ChEBI" id="CHEBI:57597"/>
    </ligand>
</feature>
<feature type="binding site" evidence="1">
    <location>
        <position position="85"/>
    </location>
    <ligand>
        <name>glycerol</name>
        <dbReference type="ChEBI" id="CHEBI:17754"/>
    </ligand>
</feature>
<feature type="binding site" evidence="1">
    <location>
        <position position="85"/>
    </location>
    <ligand>
        <name>sn-glycerol 3-phosphate</name>
        <dbReference type="ChEBI" id="CHEBI:57597"/>
    </ligand>
</feature>
<feature type="binding site" evidence="1">
    <location>
        <position position="136"/>
    </location>
    <ligand>
        <name>glycerol</name>
        <dbReference type="ChEBI" id="CHEBI:17754"/>
    </ligand>
</feature>
<feature type="binding site" evidence="1">
    <location>
        <position position="136"/>
    </location>
    <ligand>
        <name>sn-glycerol 3-phosphate</name>
        <dbReference type="ChEBI" id="CHEBI:57597"/>
    </ligand>
</feature>
<feature type="binding site" evidence="1">
    <location>
        <position position="246"/>
    </location>
    <ligand>
        <name>glycerol</name>
        <dbReference type="ChEBI" id="CHEBI:17754"/>
    </ligand>
</feature>
<feature type="binding site" evidence="1">
    <location>
        <position position="246"/>
    </location>
    <ligand>
        <name>sn-glycerol 3-phosphate</name>
        <dbReference type="ChEBI" id="CHEBI:57597"/>
    </ligand>
</feature>
<feature type="binding site" evidence="1">
    <location>
        <position position="247"/>
    </location>
    <ligand>
        <name>glycerol</name>
        <dbReference type="ChEBI" id="CHEBI:17754"/>
    </ligand>
</feature>
<feature type="binding site" evidence="1">
    <location>
        <position position="268"/>
    </location>
    <ligand>
        <name>ADP</name>
        <dbReference type="ChEBI" id="CHEBI:456216"/>
    </ligand>
</feature>
<feature type="binding site" evidence="1">
    <location>
        <position position="268"/>
    </location>
    <ligand>
        <name>ATP</name>
        <dbReference type="ChEBI" id="CHEBI:30616"/>
    </ligand>
</feature>
<feature type="binding site" evidence="1">
    <location>
        <position position="311"/>
    </location>
    <ligand>
        <name>ADP</name>
        <dbReference type="ChEBI" id="CHEBI:456216"/>
    </ligand>
</feature>
<feature type="binding site" evidence="1">
    <location>
        <position position="311"/>
    </location>
    <ligand>
        <name>ATP</name>
        <dbReference type="ChEBI" id="CHEBI:30616"/>
    </ligand>
</feature>
<feature type="binding site" evidence="1">
    <location>
        <position position="315"/>
    </location>
    <ligand>
        <name>ATP</name>
        <dbReference type="ChEBI" id="CHEBI:30616"/>
    </ligand>
</feature>
<feature type="binding site" evidence="1">
    <location>
        <position position="412"/>
    </location>
    <ligand>
        <name>ADP</name>
        <dbReference type="ChEBI" id="CHEBI:456216"/>
    </ligand>
</feature>
<feature type="binding site" evidence="1">
    <location>
        <position position="412"/>
    </location>
    <ligand>
        <name>ATP</name>
        <dbReference type="ChEBI" id="CHEBI:30616"/>
    </ligand>
</feature>
<feature type="binding site" evidence="1">
    <location>
        <position position="416"/>
    </location>
    <ligand>
        <name>ADP</name>
        <dbReference type="ChEBI" id="CHEBI:456216"/>
    </ligand>
</feature>
<accession>A9MZH4</accession>
<comment type="function">
    <text evidence="1">Key enzyme in the regulation of glycerol uptake and metabolism. Catalyzes the phosphorylation of glycerol to yield sn-glycerol 3-phosphate.</text>
</comment>
<comment type="catalytic activity">
    <reaction evidence="1">
        <text>glycerol + ATP = sn-glycerol 3-phosphate + ADP + H(+)</text>
        <dbReference type="Rhea" id="RHEA:21644"/>
        <dbReference type="ChEBI" id="CHEBI:15378"/>
        <dbReference type="ChEBI" id="CHEBI:17754"/>
        <dbReference type="ChEBI" id="CHEBI:30616"/>
        <dbReference type="ChEBI" id="CHEBI:57597"/>
        <dbReference type="ChEBI" id="CHEBI:456216"/>
        <dbReference type="EC" id="2.7.1.30"/>
    </reaction>
</comment>
<comment type="activity regulation">
    <text evidence="1">Activity of this regulatory enzyme is affected by several metabolites. Allosterically and non-competitively inhibited by fructose 1,6-bisphosphate (FBP) and unphosphorylated phosphocarrier protein EIIA-Glc (III-Glc), an integral component of the bacterial phosphotransferase (PTS) system.</text>
</comment>
<comment type="pathway">
    <text evidence="1">Polyol metabolism; glycerol degradation via glycerol kinase pathway; sn-glycerol 3-phosphate from glycerol: step 1/1.</text>
</comment>
<comment type="subunit">
    <text evidence="1">Homotetramer and homodimer (in equilibrium). Heterodimer with EIIA-Glc. Binds 1 zinc ion per glycerol kinase EIIA-Glc dimer. The zinc ion is important for dimerization.</text>
</comment>
<comment type="similarity">
    <text evidence="1">Belongs to the FGGY kinase family.</text>
</comment>
<name>GLPK_SALPB</name>
<proteinExistence type="inferred from homology"/>
<organism>
    <name type="scientific">Salmonella paratyphi B (strain ATCC BAA-1250 / SPB7)</name>
    <dbReference type="NCBI Taxonomy" id="1016998"/>
    <lineage>
        <taxon>Bacteria</taxon>
        <taxon>Pseudomonadati</taxon>
        <taxon>Pseudomonadota</taxon>
        <taxon>Gammaproteobacteria</taxon>
        <taxon>Enterobacterales</taxon>
        <taxon>Enterobacteriaceae</taxon>
        <taxon>Salmonella</taxon>
    </lineage>
</organism>
<gene>
    <name evidence="1" type="primary">glpK</name>
    <name type="ordered locus">SPAB_05061</name>
</gene>
<keyword id="KW-0021">Allosteric enzyme</keyword>
<keyword id="KW-0067">ATP-binding</keyword>
<keyword id="KW-0319">Glycerol metabolism</keyword>
<keyword id="KW-0418">Kinase</keyword>
<keyword id="KW-0479">Metal-binding</keyword>
<keyword id="KW-0547">Nucleotide-binding</keyword>
<keyword id="KW-0808">Transferase</keyword>
<keyword id="KW-0862">Zinc</keyword>
<reference key="1">
    <citation type="submission" date="2007-11" db="EMBL/GenBank/DDBJ databases">
        <authorList>
            <consortium name="The Salmonella enterica serovar Paratyphi B Genome Sequencing Project"/>
            <person name="McClelland M."/>
            <person name="Sanderson E.K."/>
            <person name="Porwollik S."/>
            <person name="Spieth J."/>
            <person name="Clifton W.S."/>
            <person name="Fulton R."/>
            <person name="Cordes M."/>
            <person name="Wollam A."/>
            <person name="Shah N."/>
            <person name="Pepin K."/>
            <person name="Bhonagiri V."/>
            <person name="Nash W."/>
            <person name="Johnson M."/>
            <person name="Thiruvilangam P."/>
            <person name="Wilson R."/>
        </authorList>
    </citation>
    <scope>NUCLEOTIDE SEQUENCE [LARGE SCALE GENOMIC DNA]</scope>
    <source>
        <strain>ATCC BAA-1250 / SPB7</strain>
    </source>
</reference>
<evidence type="ECO:0000255" key="1">
    <source>
        <dbReference type="HAMAP-Rule" id="MF_00186"/>
    </source>
</evidence>
<sequence length="502" mass="56052">MTEKKYIVALDQGTTSSRAVVMDHDANIVSVSQREFEQIYPKPGWVEHDPMEIWASQSSTLVEVLAKADISSDQIAAIGITNQRETAIVWERETGKPIYNAIVWQCRRTADICEQLKRDGLEDYIRDNTGLVVDPYFSGTKVKWILDHVEGSRERAKRGELLFGTVDTWLIWKMTQGRVHVTDYTNASRTMLFNIHDLDWDDKMLDVLDIPRAMLPQVRKSSEVYGQTNIGGKGGTRIPIAGIAGDQQAALFGQLCVKEGMAKNTYGTGCFMLMNTGEKAVKSENGLLTTIACGPSGEVNYALEGAVFMAGASIQWLRDEMKLISDAFDSEYFATKVKDTNGVYVVPAFTGLGAPYWDPYARGAIFGLTRGVNSNHIIRATLESIAYQTRDVLEAMQADSGIRLHALRVDGGAVANNFLMQFQSDILGTRVERPEVREVTALGAAYLAGLAVGYWQNLDELQEKAVIEREFRPGIETTERNYRYSGWKKAVKRAMAWEEHDK</sequence>
<dbReference type="EC" id="2.7.1.30" evidence="1"/>
<dbReference type="EMBL" id="CP000886">
    <property type="protein sequence ID" value="ABX70352.1"/>
    <property type="molecule type" value="Genomic_DNA"/>
</dbReference>
<dbReference type="RefSeq" id="WP_000136809.1">
    <property type="nucleotide sequence ID" value="NC_010102.1"/>
</dbReference>
<dbReference type="SMR" id="A9MZH4"/>
<dbReference type="KEGG" id="spq:SPAB_05061"/>
<dbReference type="PATRIC" id="fig|1016998.12.peg.4750"/>
<dbReference type="HOGENOM" id="CLU_009281_2_3_6"/>
<dbReference type="BioCyc" id="SENT1016998:SPAB_RS20600-MONOMER"/>
<dbReference type="UniPathway" id="UPA00618">
    <property type="reaction ID" value="UER00672"/>
</dbReference>
<dbReference type="Proteomes" id="UP000008556">
    <property type="component" value="Chromosome"/>
</dbReference>
<dbReference type="GO" id="GO:0005829">
    <property type="term" value="C:cytosol"/>
    <property type="evidence" value="ECO:0007669"/>
    <property type="project" value="TreeGrafter"/>
</dbReference>
<dbReference type="GO" id="GO:0005524">
    <property type="term" value="F:ATP binding"/>
    <property type="evidence" value="ECO:0007669"/>
    <property type="project" value="UniProtKB-UniRule"/>
</dbReference>
<dbReference type="GO" id="GO:0004370">
    <property type="term" value="F:glycerol kinase activity"/>
    <property type="evidence" value="ECO:0000250"/>
    <property type="project" value="UniProtKB"/>
</dbReference>
<dbReference type="GO" id="GO:0046872">
    <property type="term" value="F:metal ion binding"/>
    <property type="evidence" value="ECO:0007669"/>
    <property type="project" value="UniProtKB-KW"/>
</dbReference>
<dbReference type="GO" id="GO:0019563">
    <property type="term" value="P:glycerol catabolic process"/>
    <property type="evidence" value="ECO:0007669"/>
    <property type="project" value="UniProtKB-UniRule"/>
</dbReference>
<dbReference type="GO" id="GO:0006071">
    <property type="term" value="P:glycerol metabolic process"/>
    <property type="evidence" value="ECO:0000250"/>
    <property type="project" value="UniProtKB"/>
</dbReference>
<dbReference type="GO" id="GO:0006072">
    <property type="term" value="P:glycerol-3-phosphate metabolic process"/>
    <property type="evidence" value="ECO:0007669"/>
    <property type="project" value="InterPro"/>
</dbReference>
<dbReference type="CDD" id="cd07786">
    <property type="entry name" value="FGGY_EcGK_like"/>
    <property type="match status" value="1"/>
</dbReference>
<dbReference type="FunFam" id="3.30.420.40:FF:000007">
    <property type="entry name" value="Glycerol kinase"/>
    <property type="match status" value="1"/>
</dbReference>
<dbReference type="FunFam" id="3.30.420.40:FF:000008">
    <property type="entry name" value="Glycerol kinase"/>
    <property type="match status" value="1"/>
</dbReference>
<dbReference type="Gene3D" id="3.30.420.40">
    <property type="match status" value="2"/>
</dbReference>
<dbReference type="HAMAP" id="MF_00186">
    <property type="entry name" value="Glycerol_kin"/>
    <property type="match status" value="1"/>
</dbReference>
<dbReference type="InterPro" id="IPR043129">
    <property type="entry name" value="ATPase_NBD"/>
</dbReference>
<dbReference type="InterPro" id="IPR000577">
    <property type="entry name" value="Carb_kinase_FGGY"/>
</dbReference>
<dbReference type="InterPro" id="IPR018483">
    <property type="entry name" value="Carb_kinase_FGGY_CS"/>
</dbReference>
<dbReference type="InterPro" id="IPR018485">
    <property type="entry name" value="FGGY_C"/>
</dbReference>
<dbReference type="InterPro" id="IPR018484">
    <property type="entry name" value="FGGY_N"/>
</dbReference>
<dbReference type="InterPro" id="IPR005999">
    <property type="entry name" value="Glycerol_kin"/>
</dbReference>
<dbReference type="NCBIfam" id="TIGR01311">
    <property type="entry name" value="glycerol_kin"/>
    <property type="match status" value="1"/>
</dbReference>
<dbReference type="NCBIfam" id="NF000756">
    <property type="entry name" value="PRK00047.1"/>
    <property type="match status" value="1"/>
</dbReference>
<dbReference type="PANTHER" id="PTHR10196:SF69">
    <property type="entry name" value="GLYCEROL KINASE"/>
    <property type="match status" value="1"/>
</dbReference>
<dbReference type="PANTHER" id="PTHR10196">
    <property type="entry name" value="SUGAR KINASE"/>
    <property type="match status" value="1"/>
</dbReference>
<dbReference type="Pfam" id="PF02782">
    <property type="entry name" value="FGGY_C"/>
    <property type="match status" value="1"/>
</dbReference>
<dbReference type="Pfam" id="PF00370">
    <property type="entry name" value="FGGY_N"/>
    <property type="match status" value="1"/>
</dbReference>
<dbReference type="PIRSF" id="PIRSF000538">
    <property type="entry name" value="GlpK"/>
    <property type="match status" value="1"/>
</dbReference>
<dbReference type="SUPFAM" id="SSF53067">
    <property type="entry name" value="Actin-like ATPase domain"/>
    <property type="match status" value="2"/>
</dbReference>
<dbReference type="PROSITE" id="PS00933">
    <property type="entry name" value="FGGY_KINASES_1"/>
    <property type="match status" value="1"/>
</dbReference>
<dbReference type="PROSITE" id="PS00445">
    <property type="entry name" value="FGGY_KINASES_2"/>
    <property type="match status" value="1"/>
</dbReference>
<protein>
    <recommendedName>
        <fullName evidence="1">Glycerol kinase</fullName>
        <ecNumber evidence="1">2.7.1.30</ecNumber>
    </recommendedName>
    <alternativeName>
        <fullName evidence="1">ATP:glycerol 3-phosphotransferase</fullName>
    </alternativeName>
    <alternativeName>
        <fullName evidence="1">Glycerokinase</fullName>
        <shortName evidence="1">GK</shortName>
    </alternativeName>
</protein>